<keyword id="KW-0143">Chaperone</keyword>
<keyword id="KW-0256">Endoplasmic reticulum</keyword>
<keyword id="KW-0472">Membrane</keyword>
<keyword id="KW-0732">Signal</keyword>
<keyword id="KW-0812">Transmembrane</keyword>
<keyword id="KW-1133">Transmembrane helix</keyword>
<dbReference type="EMBL" id="CP003825">
    <property type="protein sequence ID" value="AFR95332.1"/>
    <property type="molecule type" value="Genomic_DNA"/>
</dbReference>
<dbReference type="RefSeq" id="XP_012050186.1">
    <property type="nucleotide sequence ID" value="XM_012194796.1"/>
</dbReference>
<dbReference type="SMR" id="J9VLH0"/>
<dbReference type="GeneID" id="23886116"/>
<dbReference type="KEGG" id="cng:CNAG_02500"/>
<dbReference type="VEuPathDB" id="FungiDB:CNAG_02500"/>
<dbReference type="HOGENOM" id="CLU_018224_1_2_1"/>
<dbReference type="OrthoDB" id="6691at5206"/>
<dbReference type="Proteomes" id="UP000010091">
    <property type="component" value="Chromosome 6"/>
</dbReference>
<dbReference type="GO" id="GO:0005789">
    <property type="term" value="C:endoplasmic reticulum membrane"/>
    <property type="evidence" value="ECO:0007669"/>
    <property type="project" value="UniProtKB-SubCell"/>
</dbReference>
<dbReference type="GO" id="GO:0005509">
    <property type="term" value="F:calcium ion binding"/>
    <property type="evidence" value="ECO:0007669"/>
    <property type="project" value="InterPro"/>
</dbReference>
<dbReference type="GO" id="GO:0051082">
    <property type="term" value="F:unfolded protein binding"/>
    <property type="evidence" value="ECO:0007669"/>
    <property type="project" value="InterPro"/>
</dbReference>
<dbReference type="GO" id="GO:0036503">
    <property type="term" value="P:ERAD pathway"/>
    <property type="evidence" value="ECO:0007669"/>
    <property type="project" value="TreeGrafter"/>
</dbReference>
<dbReference type="GO" id="GO:0006457">
    <property type="term" value="P:protein folding"/>
    <property type="evidence" value="ECO:0007669"/>
    <property type="project" value="InterPro"/>
</dbReference>
<dbReference type="FunFam" id="2.10.250.10:FF:000001">
    <property type="entry name" value="Calnexin homolog"/>
    <property type="match status" value="1"/>
</dbReference>
<dbReference type="FunFam" id="2.60.120.200:FF:000011">
    <property type="entry name" value="Probable calnexin"/>
    <property type="match status" value="1"/>
</dbReference>
<dbReference type="Gene3D" id="2.60.120.200">
    <property type="match status" value="1"/>
</dbReference>
<dbReference type="Gene3D" id="2.10.250.10">
    <property type="entry name" value="Calreticulin/calnexin, P domain"/>
    <property type="match status" value="1"/>
</dbReference>
<dbReference type="InterPro" id="IPR001580">
    <property type="entry name" value="Calret/calnex"/>
</dbReference>
<dbReference type="InterPro" id="IPR018124">
    <property type="entry name" value="Calret/calnex_CS"/>
</dbReference>
<dbReference type="InterPro" id="IPR009033">
    <property type="entry name" value="Calreticulin/calnexin_P_dom_sf"/>
</dbReference>
<dbReference type="InterPro" id="IPR013320">
    <property type="entry name" value="ConA-like_dom_sf"/>
</dbReference>
<dbReference type="PANTHER" id="PTHR11073:SF1">
    <property type="entry name" value="CALNEXIN 14D-RELATED"/>
    <property type="match status" value="1"/>
</dbReference>
<dbReference type="PANTHER" id="PTHR11073">
    <property type="entry name" value="CALRETICULIN AND CALNEXIN"/>
    <property type="match status" value="1"/>
</dbReference>
<dbReference type="Pfam" id="PF00262">
    <property type="entry name" value="Calreticulin"/>
    <property type="match status" value="1"/>
</dbReference>
<dbReference type="PRINTS" id="PR00626">
    <property type="entry name" value="CALRETICULIN"/>
</dbReference>
<dbReference type="SUPFAM" id="SSF49899">
    <property type="entry name" value="Concanavalin A-like lectins/glucanases"/>
    <property type="match status" value="1"/>
</dbReference>
<dbReference type="SUPFAM" id="SSF63887">
    <property type="entry name" value="P-domain of calnexin/calreticulin"/>
    <property type="match status" value="1"/>
</dbReference>
<dbReference type="PROSITE" id="PS00803">
    <property type="entry name" value="CALRETICULIN_1"/>
    <property type="match status" value="1"/>
</dbReference>
<dbReference type="PROSITE" id="PS00804">
    <property type="entry name" value="CALRETICULIN_2"/>
    <property type="match status" value="1"/>
</dbReference>
<dbReference type="PROSITE" id="PS00805">
    <property type="entry name" value="CALRETICULIN_REPEAT"/>
    <property type="match status" value="1"/>
</dbReference>
<name>CNE1_CRYNH</name>
<organism>
    <name type="scientific">Cryptococcus neoformans var. grubii serotype A (strain H99 / ATCC 208821 / CBS 10515 / FGSC 9487)</name>
    <name type="common">Filobasidiella neoformans var. grubii</name>
    <dbReference type="NCBI Taxonomy" id="235443"/>
    <lineage>
        <taxon>Eukaryota</taxon>
        <taxon>Fungi</taxon>
        <taxon>Dikarya</taxon>
        <taxon>Basidiomycota</taxon>
        <taxon>Agaricomycotina</taxon>
        <taxon>Tremellomycetes</taxon>
        <taxon>Tremellales</taxon>
        <taxon>Cryptococcaceae</taxon>
        <taxon>Cryptococcus</taxon>
        <taxon>Cryptococcus neoformans species complex</taxon>
    </lineage>
</organism>
<reference key="1">
    <citation type="journal article" date="2014" name="PLoS Genet.">
        <title>Analysis of the genome and transcriptome of Cryptococcus neoformans var. grubii reveals complex RNA expression and microevolution leading to virulence attenuation.</title>
        <authorList>
            <person name="Janbon G."/>
            <person name="Ormerod K.L."/>
            <person name="Paulet D."/>
            <person name="Byrnes E.J. III"/>
            <person name="Yadav V."/>
            <person name="Chatterjee G."/>
            <person name="Mullapudi N."/>
            <person name="Hon C.-C."/>
            <person name="Billmyre R.B."/>
            <person name="Brunel F."/>
            <person name="Bahn Y.-S."/>
            <person name="Chen W."/>
            <person name="Chen Y."/>
            <person name="Chow E.W.L."/>
            <person name="Coppee J.-Y."/>
            <person name="Floyd-Averette A."/>
            <person name="Gaillardin C."/>
            <person name="Gerik K.J."/>
            <person name="Goldberg J."/>
            <person name="Gonzalez-Hilarion S."/>
            <person name="Gujja S."/>
            <person name="Hamlin J.L."/>
            <person name="Hsueh Y.-P."/>
            <person name="Ianiri G."/>
            <person name="Jones S."/>
            <person name="Kodira C.D."/>
            <person name="Kozubowski L."/>
            <person name="Lam W."/>
            <person name="Marra M."/>
            <person name="Mesner L.D."/>
            <person name="Mieczkowski P.A."/>
            <person name="Moyrand F."/>
            <person name="Nielsen K."/>
            <person name="Proux C."/>
            <person name="Rossignol T."/>
            <person name="Schein J.E."/>
            <person name="Sun S."/>
            <person name="Wollschlaeger C."/>
            <person name="Wood I.A."/>
            <person name="Zeng Q."/>
            <person name="Neuveglise C."/>
            <person name="Newlon C.S."/>
            <person name="Perfect J.R."/>
            <person name="Lodge J.K."/>
            <person name="Idnurm A."/>
            <person name="Stajich J.E."/>
            <person name="Kronstad J.W."/>
            <person name="Sanyal K."/>
            <person name="Heitman J."/>
            <person name="Fraser J.A."/>
            <person name="Cuomo C.A."/>
            <person name="Dietrich F.S."/>
        </authorList>
    </citation>
    <scope>NUCLEOTIDE SEQUENCE [LARGE SCALE GENOMIC DNA]</scope>
    <source>
        <strain>H99 / ATCC 208821 / CBS 10515 / FGSC 9487</strain>
    </source>
</reference>
<reference key="2">
    <citation type="journal article" date="2006" name="J. Cell Sci.">
        <title>Beyond lectins: the calnexin/calreticulin chaperone system of the endoplasmic reticulum.</title>
        <authorList>
            <person name="Williams D.B."/>
        </authorList>
    </citation>
    <scope>REVIEW ON FUNCTION</scope>
</reference>
<reference key="3">
    <citation type="journal article" date="2021" name="Front. Microbiol.">
        <title>Dnj1 promotes virulence in Cryptococcus neoformans by maintaining robust endoplasmic reticulum homeostasis under temperature stress.</title>
        <authorList>
            <person name="Horianopoulos L.C."/>
            <person name="Lee C.W.J."/>
            <person name="Hu G."/>
            <person name="Caza M."/>
            <person name="Kronstad J.W."/>
        </authorList>
    </citation>
    <scope>FUNCTION</scope>
    <scope>DISRUPTION PHENOTYPE</scope>
    <scope>SUBCELLULAR LOCATION</scope>
</reference>
<sequence length="551" mass="61005">MRPQNVAGVAGTGALIMAAGALADQTVFHPTSLTAPFIEQFIESIPDSRWTVSRATKQTPVGDEIFSYVGQWEVEEPEVYPGIPGDKGLVLKTKAAHHAISTLFTEPIDPKGKSLVVQYEVKLQKGLECGGAYIKLLTDQQDEGLRAGEDYTDKTPFTIMFGPDKCGSTNKVHFIFRHKNPLTGEWEEKHLKNPPSPKITKTTALYTLITNPDQTFEILINDESVRKGSLLEDFDPAVNPPKEIDDPEDFKPETWVDEAEIEDITATKPDDWDEDAPMMITDTAAVKPVDWLEEEPETIPDPEAEKPEEWDDEEDGDWIPPMVPNPKCEDVSGCGPWTAPKIRNPDYKGKWTVPRIPNPDYKGPWAPRKIANPAFFEDLHPSDFTKIGGVGIELWTMTEDILFDNLYIGHDAAQAKKFAEETYHVKKPIEKEAEGSNEDELEEPSSLVEKVQLKVYEFLHLATFDIAQAIKQMPEVAAGLAAAVFTLLGMLLALFGFIGSAPTKVKQTTVKTKAVAPVAPAGEEEKKALDQAGVEIPAEGSKKRVTRSTKE</sequence>
<protein>
    <recommendedName>
        <fullName evidence="4">Calnexin</fullName>
    </recommendedName>
</protein>
<accession>J9VLH0</accession>
<comment type="function">
    <text evidence="3 6">Endoplasmic reticulum (ER) chaperone that functions to stabilize non-native glycoproteins and retain them in the ER until they are properly folded or targeted for ER associated degradation (ERAD) (Probable). With co-chaperone DNJ1, coordinately maintains ER homeostasis and contributes to maintenance of cell wall architecture (PubMed:34566931).</text>
</comment>
<comment type="subcellular location">
    <subcellularLocation>
        <location evidence="3">Endoplasmic reticulum membrane</location>
        <topology evidence="1">Single-pass membrane protein</topology>
    </subcellularLocation>
</comment>
<comment type="disruption phenotype">
    <text evidence="3">Leads to a slight growth defect at 30 degrees Celsius and marked defect at 37 degrees Celsius (PubMed:34566931). Leads to abnormal cell morphology of enlarged cells with collapsed cell walls and increased chitin within the cell walls, as well as strong growth defects at both 30 and 37 degrees Celsius when both DNJ1 and CNE1 are deleted (PubMed:34566931).</text>
</comment>
<comment type="similarity">
    <text evidence="5">Belongs to the calreticulin family.</text>
</comment>
<proteinExistence type="inferred from homology"/>
<feature type="signal peptide" evidence="1">
    <location>
        <begin position="1"/>
        <end position="23"/>
    </location>
</feature>
<feature type="chain" id="PRO_5005137169" description="Calnexin">
    <location>
        <begin position="24"/>
        <end position="551"/>
    </location>
</feature>
<feature type="topological domain" description="Lumenal" evidence="5">
    <location>
        <begin position="24"/>
        <end position="477"/>
    </location>
</feature>
<feature type="transmembrane region" description="Helical" evidence="1">
    <location>
        <begin position="478"/>
        <end position="498"/>
    </location>
</feature>
<feature type="topological domain" description="Cytoplasmic" evidence="5">
    <location>
        <begin position="499"/>
        <end position="551"/>
    </location>
</feature>
<feature type="region of interest" description="Disordered" evidence="2">
    <location>
        <begin position="293"/>
        <end position="315"/>
    </location>
</feature>
<feature type="region of interest" description="Disordered" evidence="2">
    <location>
        <begin position="526"/>
        <end position="551"/>
    </location>
</feature>
<gene>
    <name evidence="4" type="primary">CNE1</name>
    <name type="ORF">CNAG_02500</name>
</gene>
<evidence type="ECO:0000255" key="1"/>
<evidence type="ECO:0000256" key="2">
    <source>
        <dbReference type="SAM" id="MobiDB-lite"/>
    </source>
</evidence>
<evidence type="ECO:0000269" key="3">
    <source>
    </source>
</evidence>
<evidence type="ECO:0000303" key="4">
    <source>
    </source>
</evidence>
<evidence type="ECO:0000305" key="5"/>
<evidence type="ECO:0000305" key="6">
    <source>
    </source>
</evidence>